<accession>O04435</accession>
<protein>
    <recommendedName>
        <fullName evidence="1">Ribulose bisphosphate carboxylase large chain</fullName>
        <shortName evidence="1">RuBisCO large subunit</shortName>
        <ecNumber evidence="1">4.1.1.39</ecNumber>
    </recommendedName>
</protein>
<name>RBL_PERSE</name>
<evidence type="ECO:0000255" key="1">
    <source>
        <dbReference type="HAMAP-Rule" id="MF_01338"/>
    </source>
</evidence>
<evidence type="ECO:0000269" key="2">
    <source>
    </source>
</evidence>
<evidence type="ECO:0000312" key="3">
    <source>
        <dbReference type="EMBL" id="BAA20467.1"/>
    </source>
</evidence>
<proteinExistence type="inferred from homology"/>
<geneLocation type="chloroplast" evidence="3"/>
<sequence length="469" mass="51966">TKASVGFKAGVKEYKLTYYTPDYEPHDHDILAAFRVTPQPGVPPEEAGAAVAAESSTGTWTTVWTDGLTSLDRYKGRCYNIEPVAGEENQFIAYVAYPLDLFEEGSVTNMFTSIVGNVFGFKALRALRLEDLRIPPAYTKTFQGPPHGIQVERDKLNKYGRPLLGCTIKPKLGLSAKNYGRAVYECLRGGLDFTKDDENVNSQPFMRWRDRFLFCAEAIFKSQSETGEIKGHYLNATAGTCEEMIKRAVFARELGVPIVMHDYLTGGFTANTSLAHYCRDNGLLLHIHRAMHAVIDRQKNHGIHFRVLAKALRMSGGDHIHAGTVVGKLEGERDITLGFVDLLRDDFVEKDRSRGIYFTQPWVSLPGVIPVASGGIHVWHMPALTEIFGDDSVLQFGGGTLGHPWGNAPGAAANRVALEACVQARNEGRDLAREGNEIIRKASKWSPELAAACEVWKEIKFEFQAMDTL</sequence>
<dbReference type="EC" id="4.1.1.39" evidence="1"/>
<dbReference type="EMBL" id="D86289">
    <property type="protein sequence ID" value="BAA20467.1"/>
    <property type="molecule type" value="Genomic_DNA"/>
</dbReference>
<dbReference type="SMR" id="O04435"/>
<dbReference type="GO" id="GO:0009507">
    <property type="term" value="C:chloroplast"/>
    <property type="evidence" value="ECO:0007669"/>
    <property type="project" value="UniProtKB-SubCell"/>
</dbReference>
<dbReference type="GO" id="GO:0000287">
    <property type="term" value="F:magnesium ion binding"/>
    <property type="evidence" value="ECO:0007669"/>
    <property type="project" value="InterPro"/>
</dbReference>
<dbReference type="GO" id="GO:0004497">
    <property type="term" value="F:monooxygenase activity"/>
    <property type="evidence" value="ECO:0007669"/>
    <property type="project" value="UniProtKB-KW"/>
</dbReference>
<dbReference type="GO" id="GO:0016984">
    <property type="term" value="F:ribulose-bisphosphate carboxylase activity"/>
    <property type="evidence" value="ECO:0007669"/>
    <property type="project" value="UniProtKB-EC"/>
</dbReference>
<dbReference type="GO" id="GO:0009853">
    <property type="term" value="P:photorespiration"/>
    <property type="evidence" value="ECO:0007669"/>
    <property type="project" value="UniProtKB-KW"/>
</dbReference>
<dbReference type="GO" id="GO:0019253">
    <property type="term" value="P:reductive pentose-phosphate cycle"/>
    <property type="evidence" value="ECO:0007669"/>
    <property type="project" value="UniProtKB-KW"/>
</dbReference>
<dbReference type="CDD" id="cd08212">
    <property type="entry name" value="RuBisCO_large_I"/>
    <property type="match status" value="1"/>
</dbReference>
<dbReference type="FunFam" id="3.20.20.110:FF:000001">
    <property type="entry name" value="Ribulose bisphosphate carboxylase large chain"/>
    <property type="match status" value="1"/>
</dbReference>
<dbReference type="FunFam" id="3.30.70.150:FF:000001">
    <property type="entry name" value="Ribulose bisphosphate carboxylase large chain"/>
    <property type="match status" value="1"/>
</dbReference>
<dbReference type="Gene3D" id="3.20.20.110">
    <property type="entry name" value="Ribulose bisphosphate carboxylase, large subunit, C-terminal domain"/>
    <property type="match status" value="1"/>
</dbReference>
<dbReference type="Gene3D" id="3.30.70.150">
    <property type="entry name" value="RuBisCO large subunit, N-terminal domain"/>
    <property type="match status" value="1"/>
</dbReference>
<dbReference type="HAMAP" id="MF_01338">
    <property type="entry name" value="RuBisCO_L_type1"/>
    <property type="match status" value="1"/>
</dbReference>
<dbReference type="InterPro" id="IPR033966">
    <property type="entry name" value="RuBisCO"/>
</dbReference>
<dbReference type="InterPro" id="IPR020878">
    <property type="entry name" value="RuBisCo_large_chain_AS"/>
</dbReference>
<dbReference type="InterPro" id="IPR000685">
    <property type="entry name" value="RuBisCO_lsu_C"/>
</dbReference>
<dbReference type="InterPro" id="IPR036376">
    <property type="entry name" value="RuBisCO_lsu_C_sf"/>
</dbReference>
<dbReference type="InterPro" id="IPR017443">
    <property type="entry name" value="RuBisCO_lsu_fd_N"/>
</dbReference>
<dbReference type="InterPro" id="IPR036422">
    <property type="entry name" value="RuBisCO_lsu_N_sf"/>
</dbReference>
<dbReference type="InterPro" id="IPR020888">
    <property type="entry name" value="RuBisCO_lsuI"/>
</dbReference>
<dbReference type="NCBIfam" id="NF003252">
    <property type="entry name" value="PRK04208.1"/>
    <property type="match status" value="1"/>
</dbReference>
<dbReference type="PANTHER" id="PTHR42704">
    <property type="entry name" value="RIBULOSE BISPHOSPHATE CARBOXYLASE"/>
    <property type="match status" value="1"/>
</dbReference>
<dbReference type="PANTHER" id="PTHR42704:SF16">
    <property type="entry name" value="RIBULOSE BISPHOSPHATE CARBOXYLASE LARGE CHAIN"/>
    <property type="match status" value="1"/>
</dbReference>
<dbReference type="Pfam" id="PF00016">
    <property type="entry name" value="RuBisCO_large"/>
    <property type="match status" value="1"/>
</dbReference>
<dbReference type="Pfam" id="PF02788">
    <property type="entry name" value="RuBisCO_large_N"/>
    <property type="match status" value="1"/>
</dbReference>
<dbReference type="SFLD" id="SFLDG01052">
    <property type="entry name" value="RuBisCO"/>
    <property type="match status" value="1"/>
</dbReference>
<dbReference type="SFLD" id="SFLDS00014">
    <property type="entry name" value="RuBisCO"/>
    <property type="match status" value="1"/>
</dbReference>
<dbReference type="SFLD" id="SFLDG00301">
    <property type="entry name" value="RuBisCO-like_proteins"/>
    <property type="match status" value="1"/>
</dbReference>
<dbReference type="SUPFAM" id="SSF51649">
    <property type="entry name" value="RuBisCo, C-terminal domain"/>
    <property type="match status" value="1"/>
</dbReference>
<dbReference type="SUPFAM" id="SSF54966">
    <property type="entry name" value="RuBisCO, large subunit, small (N-terminal) domain"/>
    <property type="match status" value="1"/>
</dbReference>
<dbReference type="PROSITE" id="PS00157">
    <property type="entry name" value="RUBISCO_LARGE"/>
    <property type="match status" value="1"/>
</dbReference>
<organism>
    <name type="scientific">Persicaria senticosa</name>
    <name type="common">Knotweed</name>
    <name type="synonym">Polygonum senticosum</name>
    <dbReference type="NCBI Taxonomy" id="61509"/>
    <lineage>
        <taxon>Eukaryota</taxon>
        <taxon>Viridiplantae</taxon>
        <taxon>Streptophyta</taxon>
        <taxon>Embryophyta</taxon>
        <taxon>Tracheophyta</taxon>
        <taxon>Spermatophyta</taxon>
        <taxon>Magnoliopsida</taxon>
        <taxon>eudicotyledons</taxon>
        <taxon>Gunneridae</taxon>
        <taxon>Pentapetalae</taxon>
        <taxon>Caryophyllales</taxon>
        <taxon>Polygonaceae</taxon>
        <taxon>Polygonoideae</taxon>
        <taxon>Persicarieae</taxon>
        <taxon>Persicaria</taxon>
    </lineage>
</organism>
<gene>
    <name evidence="1 3" type="primary">rbcL</name>
</gene>
<feature type="chain" id="PRO_0000062561" description="Ribulose bisphosphate carboxylase large chain">
    <location>
        <begin position="1" status="less than"/>
        <end position="469"/>
    </location>
</feature>
<feature type="active site" description="Proton acceptor" evidence="1">
    <location>
        <position position="169"/>
    </location>
</feature>
<feature type="active site" description="Proton acceptor" evidence="1">
    <location>
        <position position="288"/>
    </location>
</feature>
<feature type="binding site" description="in homodimeric partner" evidence="1">
    <location>
        <position position="117"/>
    </location>
    <ligand>
        <name>substrate</name>
    </ligand>
</feature>
<feature type="binding site" evidence="1">
    <location>
        <position position="167"/>
    </location>
    <ligand>
        <name>substrate</name>
    </ligand>
</feature>
<feature type="binding site" evidence="1">
    <location>
        <position position="171"/>
    </location>
    <ligand>
        <name>substrate</name>
    </ligand>
</feature>
<feature type="binding site" description="via carbamate group" evidence="1">
    <location>
        <position position="195"/>
    </location>
    <ligand>
        <name>Mg(2+)</name>
        <dbReference type="ChEBI" id="CHEBI:18420"/>
    </ligand>
</feature>
<feature type="binding site" evidence="1">
    <location>
        <position position="197"/>
    </location>
    <ligand>
        <name>Mg(2+)</name>
        <dbReference type="ChEBI" id="CHEBI:18420"/>
    </ligand>
</feature>
<feature type="binding site" evidence="1">
    <location>
        <position position="198"/>
    </location>
    <ligand>
        <name>Mg(2+)</name>
        <dbReference type="ChEBI" id="CHEBI:18420"/>
    </ligand>
</feature>
<feature type="binding site" evidence="1">
    <location>
        <position position="289"/>
    </location>
    <ligand>
        <name>substrate</name>
    </ligand>
</feature>
<feature type="binding site" evidence="1">
    <location>
        <position position="321"/>
    </location>
    <ligand>
        <name>substrate</name>
    </ligand>
</feature>
<feature type="binding site" evidence="1">
    <location>
        <position position="373"/>
    </location>
    <ligand>
        <name>substrate</name>
    </ligand>
</feature>
<feature type="site" description="Transition state stabilizer" evidence="1">
    <location>
        <position position="328"/>
    </location>
</feature>
<feature type="modified residue" description="N6,N6,N6-trimethyllysine" evidence="1">
    <location>
        <position position="8"/>
    </location>
</feature>
<feature type="modified residue" description="N6-carboxylysine" evidence="1">
    <location>
        <position position="195"/>
    </location>
</feature>
<feature type="disulfide bond" description="Interchain; in linked form" evidence="1">
    <location>
        <position position="241"/>
    </location>
</feature>
<feature type="non-terminal residue" evidence="3">
    <location>
        <position position="1"/>
    </location>
</feature>
<reference evidence="3" key="1">
    <citation type="journal article" date="1996" name="Genes Genet. Syst.">
        <title>Comparative study of rbcL gene sequences in Fagopyrum and related taxa.</title>
        <authorList>
            <person name="Yasui Y."/>
            <person name="Ohnishi O."/>
        </authorList>
    </citation>
    <scope>NUCLEOTIDE SEQUENCE [GENOMIC DNA]</scope>
    <source>
        <tissue evidence="2">Leaf</tissue>
    </source>
</reference>
<comment type="function">
    <text evidence="1">RuBisCO catalyzes two reactions: the carboxylation of D-ribulose 1,5-bisphosphate, the primary event in carbon dioxide fixation, as well as the oxidative fragmentation of the pentose substrate in the photorespiration process. Both reactions occur simultaneously and in competition at the same active site.</text>
</comment>
<comment type="catalytic activity">
    <reaction evidence="1">
        <text>2 (2R)-3-phosphoglycerate + 2 H(+) = D-ribulose 1,5-bisphosphate + CO2 + H2O</text>
        <dbReference type="Rhea" id="RHEA:23124"/>
        <dbReference type="ChEBI" id="CHEBI:15377"/>
        <dbReference type="ChEBI" id="CHEBI:15378"/>
        <dbReference type="ChEBI" id="CHEBI:16526"/>
        <dbReference type="ChEBI" id="CHEBI:57870"/>
        <dbReference type="ChEBI" id="CHEBI:58272"/>
        <dbReference type="EC" id="4.1.1.39"/>
    </reaction>
</comment>
<comment type="catalytic activity">
    <reaction evidence="1">
        <text>D-ribulose 1,5-bisphosphate + O2 = 2-phosphoglycolate + (2R)-3-phosphoglycerate + 2 H(+)</text>
        <dbReference type="Rhea" id="RHEA:36631"/>
        <dbReference type="ChEBI" id="CHEBI:15378"/>
        <dbReference type="ChEBI" id="CHEBI:15379"/>
        <dbReference type="ChEBI" id="CHEBI:57870"/>
        <dbReference type="ChEBI" id="CHEBI:58033"/>
        <dbReference type="ChEBI" id="CHEBI:58272"/>
    </reaction>
</comment>
<comment type="cofactor">
    <cofactor evidence="1">
        <name>Mg(2+)</name>
        <dbReference type="ChEBI" id="CHEBI:18420"/>
    </cofactor>
    <text evidence="1">Binds 1 Mg(2+) ion per subunit.</text>
</comment>
<comment type="subunit">
    <text evidence="1">Heterohexadecamer of 8 large chains and 8 small chains; disulfide-linked. The disulfide link is formed within the large subunit homodimers.</text>
</comment>
<comment type="subcellular location">
    <subcellularLocation>
        <location>Plastid</location>
        <location>Chloroplast</location>
    </subcellularLocation>
</comment>
<comment type="PTM">
    <text evidence="1">The disulfide bond which can form in the large chain dimeric partners within the hexadecamer appears to be associated with oxidative stress and protein turnover.</text>
</comment>
<comment type="miscellaneous">
    <text evidence="1">The basic functional RuBisCO is composed of a large chain homodimer in a 'head-to-tail' conformation. In form I RuBisCO this homodimer is arranged in a barrel-like tetramer with the small subunits forming a tetrameric 'cap' on each end of the 'barrel'.</text>
</comment>
<comment type="similarity">
    <text evidence="1">Belongs to the RuBisCO large chain family. Type I subfamily.</text>
</comment>
<keyword id="KW-0113">Calvin cycle</keyword>
<keyword id="KW-0120">Carbon dioxide fixation</keyword>
<keyword id="KW-0150">Chloroplast</keyword>
<keyword id="KW-1015">Disulfide bond</keyword>
<keyword id="KW-0456">Lyase</keyword>
<keyword id="KW-0460">Magnesium</keyword>
<keyword id="KW-0479">Metal-binding</keyword>
<keyword id="KW-0488">Methylation</keyword>
<keyword id="KW-0503">Monooxygenase</keyword>
<keyword id="KW-0560">Oxidoreductase</keyword>
<keyword id="KW-0601">Photorespiration</keyword>
<keyword id="KW-0602">Photosynthesis</keyword>
<keyword id="KW-0934">Plastid</keyword>